<comment type="function">
    <text evidence="1">Part of the twin-arginine translocation (Tat) system that transports large folded proteins containing a characteristic twin-arginine motif in their signal peptide across membranes. TatA could form the protein-conducting channel of the Tat system.</text>
</comment>
<comment type="subunit">
    <text evidence="1">The Tat system comprises two distinct complexes: a TatABC complex, containing multiple copies of TatA, TatB and TatC subunits, and a separate TatA complex, containing only TatA subunits. Substrates initially bind to the TatABC complex, which probably triggers association of the separate TatA complex to form the active translocon.</text>
</comment>
<comment type="subcellular location">
    <subcellularLocation>
        <location evidence="1">Cell inner membrane</location>
        <topology evidence="1">Single-pass membrane protein</topology>
    </subcellularLocation>
</comment>
<comment type="similarity">
    <text evidence="1">Belongs to the TatA/E family.</text>
</comment>
<accession>Q136H1</accession>
<organism>
    <name type="scientific">Rhodopseudomonas palustris (strain BisB5)</name>
    <dbReference type="NCBI Taxonomy" id="316057"/>
    <lineage>
        <taxon>Bacteria</taxon>
        <taxon>Pseudomonadati</taxon>
        <taxon>Pseudomonadota</taxon>
        <taxon>Alphaproteobacteria</taxon>
        <taxon>Hyphomicrobiales</taxon>
        <taxon>Nitrobacteraceae</taxon>
        <taxon>Rhodopseudomonas</taxon>
    </lineage>
</organism>
<dbReference type="EMBL" id="CP000283">
    <property type="protein sequence ID" value="ABE40018.1"/>
    <property type="molecule type" value="Genomic_DNA"/>
</dbReference>
<dbReference type="SMR" id="Q136H1"/>
<dbReference type="STRING" id="316057.RPD_2790"/>
<dbReference type="KEGG" id="rpd:RPD_2790"/>
<dbReference type="eggNOG" id="COG1826">
    <property type="taxonomic scope" value="Bacteria"/>
</dbReference>
<dbReference type="HOGENOM" id="CLU_086034_5_0_5"/>
<dbReference type="BioCyc" id="RPAL316057:RPD_RS14015-MONOMER"/>
<dbReference type="Proteomes" id="UP000001818">
    <property type="component" value="Chromosome"/>
</dbReference>
<dbReference type="GO" id="GO:0033281">
    <property type="term" value="C:TAT protein transport complex"/>
    <property type="evidence" value="ECO:0007669"/>
    <property type="project" value="UniProtKB-UniRule"/>
</dbReference>
<dbReference type="GO" id="GO:0008320">
    <property type="term" value="F:protein transmembrane transporter activity"/>
    <property type="evidence" value="ECO:0007669"/>
    <property type="project" value="UniProtKB-UniRule"/>
</dbReference>
<dbReference type="GO" id="GO:0043953">
    <property type="term" value="P:protein transport by the Tat complex"/>
    <property type="evidence" value="ECO:0007669"/>
    <property type="project" value="UniProtKB-UniRule"/>
</dbReference>
<dbReference type="Gene3D" id="1.20.5.3310">
    <property type="match status" value="1"/>
</dbReference>
<dbReference type="HAMAP" id="MF_00236">
    <property type="entry name" value="TatA_E"/>
    <property type="match status" value="1"/>
</dbReference>
<dbReference type="InterPro" id="IPR003369">
    <property type="entry name" value="TatA/B/E"/>
</dbReference>
<dbReference type="InterPro" id="IPR006312">
    <property type="entry name" value="TatA/E"/>
</dbReference>
<dbReference type="NCBIfam" id="NF001940">
    <property type="entry name" value="PRK00720.1"/>
    <property type="match status" value="1"/>
</dbReference>
<dbReference type="NCBIfam" id="TIGR01411">
    <property type="entry name" value="tatAE"/>
    <property type="match status" value="1"/>
</dbReference>
<dbReference type="PANTHER" id="PTHR42982">
    <property type="entry name" value="SEC-INDEPENDENT PROTEIN TRANSLOCASE PROTEIN TATA"/>
    <property type="match status" value="1"/>
</dbReference>
<dbReference type="PANTHER" id="PTHR42982:SF1">
    <property type="entry name" value="SEC-INDEPENDENT PROTEIN TRANSLOCASE PROTEIN TATA"/>
    <property type="match status" value="1"/>
</dbReference>
<dbReference type="Pfam" id="PF02416">
    <property type="entry name" value="TatA_B_E"/>
    <property type="match status" value="1"/>
</dbReference>
<protein>
    <recommendedName>
        <fullName evidence="1">Sec-independent protein translocase protein TatA</fullName>
    </recommendedName>
</protein>
<evidence type="ECO:0000255" key="1">
    <source>
        <dbReference type="HAMAP-Rule" id="MF_00236"/>
    </source>
</evidence>
<evidence type="ECO:0000256" key="2">
    <source>
        <dbReference type="SAM" id="MobiDB-lite"/>
    </source>
</evidence>
<keyword id="KW-0997">Cell inner membrane</keyword>
<keyword id="KW-1003">Cell membrane</keyword>
<keyword id="KW-0472">Membrane</keyword>
<keyword id="KW-0653">Protein transport</keyword>
<keyword id="KW-0811">Translocation</keyword>
<keyword id="KW-0812">Transmembrane</keyword>
<keyword id="KW-1133">Transmembrane helix</keyword>
<keyword id="KW-0813">Transport</keyword>
<name>TATA_RHOPS</name>
<proteinExistence type="inferred from homology"/>
<feature type="chain" id="PRO_1000044435" description="Sec-independent protein translocase protein TatA">
    <location>
        <begin position="1"/>
        <end position="79"/>
    </location>
</feature>
<feature type="transmembrane region" description="Helical" evidence="1">
    <location>
        <begin position="1"/>
        <end position="21"/>
    </location>
</feature>
<feature type="region of interest" description="Disordered" evidence="2">
    <location>
        <begin position="43"/>
        <end position="79"/>
    </location>
</feature>
<feature type="compositionally biased region" description="Basic and acidic residues" evidence="2">
    <location>
        <begin position="43"/>
        <end position="60"/>
    </location>
</feature>
<reference key="1">
    <citation type="submission" date="2006-03" db="EMBL/GenBank/DDBJ databases">
        <title>Complete sequence of Rhodopseudomonas palustris BisB5.</title>
        <authorList>
            <consortium name="US DOE Joint Genome Institute"/>
            <person name="Copeland A."/>
            <person name="Lucas S."/>
            <person name="Lapidus A."/>
            <person name="Barry K."/>
            <person name="Detter J.C."/>
            <person name="Glavina del Rio T."/>
            <person name="Hammon N."/>
            <person name="Israni S."/>
            <person name="Dalin E."/>
            <person name="Tice H."/>
            <person name="Pitluck S."/>
            <person name="Chain P."/>
            <person name="Malfatti S."/>
            <person name="Shin M."/>
            <person name="Vergez L."/>
            <person name="Schmutz J."/>
            <person name="Larimer F."/>
            <person name="Land M."/>
            <person name="Hauser L."/>
            <person name="Pelletier D.A."/>
            <person name="Kyrpides N."/>
            <person name="Lykidis A."/>
            <person name="Oda Y."/>
            <person name="Harwood C.S."/>
            <person name="Richardson P."/>
        </authorList>
    </citation>
    <scope>NUCLEOTIDE SEQUENCE [LARGE SCALE GENOMIC DNA]</scope>
    <source>
        <strain>BisB5</strain>
    </source>
</reference>
<gene>
    <name evidence="1" type="primary">tatA</name>
    <name type="ordered locus">RPD_2790</name>
</gene>
<sequence>MGSLSIWHWIVVIAVVLLLFGRGKISDLMGDVAQGIKSFKKGLQDDEKTAEKPDPVKSIDHNAPTAAAPTRTDVGSKAV</sequence>